<accession>Q03RU7</accession>
<dbReference type="EC" id="2.1.1.228" evidence="1"/>
<dbReference type="EMBL" id="CP000416">
    <property type="protein sequence ID" value="ABJ64075.1"/>
    <property type="molecule type" value="Genomic_DNA"/>
</dbReference>
<dbReference type="RefSeq" id="WP_011667665.1">
    <property type="nucleotide sequence ID" value="NC_008497.1"/>
</dbReference>
<dbReference type="SMR" id="Q03RU7"/>
<dbReference type="STRING" id="387344.LVIS_0940"/>
<dbReference type="KEGG" id="lbr:LVIS_0940"/>
<dbReference type="eggNOG" id="COG0336">
    <property type="taxonomic scope" value="Bacteria"/>
</dbReference>
<dbReference type="HOGENOM" id="CLU_047363_0_1_9"/>
<dbReference type="Proteomes" id="UP000001652">
    <property type="component" value="Chromosome"/>
</dbReference>
<dbReference type="GO" id="GO:0005829">
    <property type="term" value="C:cytosol"/>
    <property type="evidence" value="ECO:0007669"/>
    <property type="project" value="TreeGrafter"/>
</dbReference>
<dbReference type="GO" id="GO:0052906">
    <property type="term" value="F:tRNA (guanine(37)-N1)-methyltransferase activity"/>
    <property type="evidence" value="ECO:0007669"/>
    <property type="project" value="UniProtKB-UniRule"/>
</dbReference>
<dbReference type="GO" id="GO:0002939">
    <property type="term" value="P:tRNA N1-guanine methylation"/>
    <property type="evidence" value="ECO:0007669"/>
    <property type="project" value="TreeGrafter"/>
</dbReference>
<dbReference type="CDD" id="cd18080">
    <property type="entry name" value="TrmD-like"/>
    <property type="match status" value="1"/>
</dbReference>
<dbReference type="FunFam" id="1.10.1270.20:FF:000001">
    <property type="entry name" value="tRNA (guanine-N(1)-)-methyltransferase"/>
    <property type="match status" value="1"/>
</dbReference>
<dbReference type="FunFam" id="3.40.1280.10:FF:000001">
    <property type="entry name" value="tRNA (guanine-N(1)-)-methyltransferase"/>
    <property type="match status" value="1"/>
</dbReference>
<dbReference type="Gene3D" id="3.40.1280.10">
    <property type="match status" value="1"/>
</dbReference>
<dbReference type="Gene3D" id="1.10.1270.20">
    <property type="entry name" value="tRNA(m1g37)methyltransferase, domain 2"/>
    <property type="match status" value="1"/>
</dbReference>
<dbReference type="HAMAP" id="MF_00605">
    <property type="entry name" value="TrmD"/>
    <property type="match status" value="1"/>
</dbReference>
<dbReference type="InterPro" id="IPR029028">
    <property type="entry name" value="Alpha/beta_knot_MTases"/>
</dbReference>
<dbReference type="InterPro" id="IPR023148">
    <property type="entry name" value="tRNA_m1G_MeTrfase_C_sf"/>
</dbReference>
<dbReference type="InterPro" id="IPR002649">
    <property type="entry name" value="tRNA_m1G_MeTrfase_TrmD"/>
</dbReference>
<dbReference type="InterPro" id="IPR029026">
    <property type="entry name" value="tRNA_m1G_MTases_N"/>
</dbReference>
<dbReference type="InterPro" id="IPR016009">
    <property type="entry name" value="tRNA_MeTrfase_TRMD/TRM10"/>
</dbReference>
<dbReference type="NCBIfam" id="NF000648">
    <property type="entry name" value="PRK00026.1"/>
    <property type="match status" value="1"/>
</dbReference>
<dbReference type="NCBIfam" id="TIGR00088">
    <property type="entry name" value="trmD"/>
    <property type="match status" value="1"/>
</dbReference>
<dbReference type="PANTHER" id="PTHR46417">
    <property type="entry name" value="TRNA (GUANINE-N(1)-)-METHYLTRANSFERASE"/>
    <property type="match status" value="1"/>
</dbReference>
<dbReference type="PANTHER" id="PTHR46417:SF1">
    <property type="entry name" value="TRNA (GUANINE-N(1)-)-METHYLTRANSFERASE"/>
    <property type="match status" value="1"/>
</dbReference>
<dbReference type="Pfam" id="PF01746">
    <property type="entry name" value="tRNA_m1G_MT"/>
    <property type="match status" value="1"/>
</dbReference>
<dbReference type="PIRSF" id="PIRSF000386">
    <property type="entry name" value="tRNA_mtase"/>
    <property type="match status" value="1"/>
</dbReference>
<dbReference type="SUPFAM" id="SSF75217">
    <property type="entry name" value="alpha/beta knot"/>
    <property type="match status" value="1"/>
</dbReference>
<keyword id="KW-0963">Cytoplasm</keyword>
<keyword id="KW-0489">Methyltransferase</keyword>
<keyword id="KW-1185">Reference proteome</keyword>
<keyword id="KW-0949">S-adenosyl-L-methionine</keyword>
<keyword id="KW-0808">Transferase</keyword>
<keyword id="KW-0819">tRNA processing</keyword>
<proteinExistence type="inferred from homology"/>
<name>TRMD_LEVBA</name>
<protein>
    <recommendedName>
        <fullName evidence="1">tRNA (guanine-N(1)-)-methyltransferase</fullName>
        <ecNumber evidence="1">2.1.1.228</ecNumber>
    </recommendedName>
    <alternativeName>
        <fullName evidence="1">M1G-methyltransferase</fullName>
    </alternativeName>
    <alternativeName>
        <fullName evidence="1">tRNA [GM37] methyltransferase</fullName>
    </alternativeName>
</protein>
<gene>
    <name evidence="1" type="primary">trmD</name>
    <name type="ordered locus">LVIS_0940</name>
</gene>
<sequence>MRIDVLSLFPDMFSGPMHDSIVGKAIENGHLTMPVTNFRDYSTNKHGNVDDYPFGGGAGMLLQPQPIFDALKATEEQAAAEGLPKGRVILLDPAGVTFNQHVAEDFAHEEHLTFLCGHYEGYDERIRTLVTDEVSLGDFVLTGGELASMVMIDATVRLLPGVLGNAESAPGDSFSSGLLEYPQYTRPADFRGMTVPDVLISGNHGKIEKWRQKEALRRTYQRRPDLIDHDQLTAEQKRLLADVRIEEEERASRN</sequence>
<reference key="1">
    <citation type="journal article" date="2006" name="Proc. Natl. Acad. Sci. U.S.A.">
        <title>Comparative genomics of the lactic acid bacteria.</title>
        <authorList>
            <person name="Makarova K.S."/>
            <person name="Slesarev A."/>
            <person name="Wolf Y.I."/>
            <person name="Sorokin A."/>
            <person name="Mirkin B."/>
            <person name="Koonin E.V."/>
            <person name="Pavlov A."/>
            <person name="Pavlova N."/>
            <person name="Karamychev V."/>
            <person name="Polouchine N."/>
            <person name="Shakhova V."/>
            <person name="Grigoriev I."/>
            <person name="Lou Y."/>
            <person name="Rohksar D."/>
            <person name="Lucas S."/>
            <person name="Huang K."/>
            <person name="Goodstein D.M."/>
            <person name="Hawkins T."/>
            <person name="Plengvidhya V."/>
            <person name="Welker D."/>
            <person name="Hughes J."/>
            <person name="Goh Y."/>
            <person name="Benson A."/>
            <person name="Baldwin K."/>
            <person name="Lee J.-H."/>
            <person name="Diaz-Muniz I."/>
            <person name="Dosti B."/>
            <person name="Smeianov V."/>
            <person name="Wechter W."/>
            <person name="Barabote R."/>
            <person name="Lorca G."/>
            <person name="Altermann E."/>
            <person name="Barrangou R."/>
            <person name="Ganesan B."/>
            <person name="Xie Y."/>
            <person name="Rawsthorne H."/>
            <person name="Tamir D."/>
            <person name="Parker C."/>
            <person name="Breidt F."/>
            <person name="Broadbent J.R."/>
            <person name="Hutkins R."/>
            <person name="O'Sullivan D."/>
            <person name="Steele J."/>
            <person name="Unlu G."/>
            <person name="Saier M.H. Jr."/>
            <person name="Klaenhammer T."/>
            <person name="Richardson P."/>
            <person name="Kozyavkin S."/>
            <person name="Weimer B.C."/>
            <person name="Mills D.A."/>
        </authorList>
    </citation>
    <scope>NUCLEOTIDE SEQUENCE [LARGE SCALE GENOMIC DNA]</scope>
    <source>
        <strain>ATCC 367 / BCRC 12310 / CIP 105137 / JCM 1170 / LMG 11437 / NCIMB 947 / NCTC 947</strain>
    </source>
</reference>
<evidence type="ECO:0000255" key="1">
    <source>
        <dbReference type="HAMAP-Rule" id="MF_00605"/>
    </source>
</evidence>
<comment type="function">
    <text evidence="1">Specifically methylates guanosine-37 in various tRNAs.</text>
</comment>
<comment type="catalytic activity">
    <reaction evidence="1">
        <text>guanosine(37) in tRNA + S-adenosyl-L-methionine = N(1)-methylguanosine(37) in tRNA + S-adenosyl-L-homocysteine + H(+)</text>
        <dbReference type="Rhea" id="RHEA:36899"/>
        <dbReference type="Rhea" id="RHEA-COMP:10145"/>
        <dbReference type="Rhea" id="RHEA-COMP:10147"/>
        <dbReference type="ChEBI" id="CHEBI:15378"/>
        <dbReference type="ChEBI" id="CHEBI:57856"/>
        <dbReference type="ChEBI" id="CHEBI:59789"/>
        <dbReference type="ChEBI" id="CHEBI:73542"/>
        <dbReference type="ChEBI" id="CHEBI:74269"/>
        <dbReference type="EC" id="2.1.1.228"/>
    </reaction>
</comment>
<comment type="subunit">
    <text evidence="1">Homodimer.</text>
</comment>
<comment type="subcellular location">
    <subcellularLocation>
        <location evidence="1">Cytoplasm</location>
    </subcellularLocation>
</comment>
<comment type="similarity">
    <text evidence="1">Belongs to the RNA methyltransferase TrmD family.</text>
</comment>
<organism>
    <name type="scientific">Levilactobacillus brevis (strain ATCC 367 / BCRC 12310 / CIP 105137 / JCM 1170 / LMG 11437 / NCIMB 947 / NCTC 947)</name>
    <name type="common">Lactobacillus brevis</name>
    <dbReference type="NCBI Taxonomy" id="387344"/>
    <lineage>
        <taxon>Bacteria</taxon>
        <taxon>Bacillati</taxon>
        <taxon>Bacillota</taxon>
        <taxon>Bacilli</taxon>
        <taxon>Lactobacillales</taxon>
        <taxon>Lactobacillaceae</taxon>
        <taxon>Levilactobacillus</taxon>
    </lineage>
</organism>
<feature type="chain" id="PRO_1000006488" description="tRNA (guanine-N(1)-)-methyltransferase">
    <location>
        <begin position="1"/>
        <end position="254"/>
    </location>
</feature>
<feature type="binding site" evidence="1">
    <location>
        <position position="117"/>
    </location>
    <ligand>
        <name>S-adenosyl-L-methionine</name>
        <dbReference type="ChEBI" id="CHEBI:59789"/>
    </ligand>
</feature>
<feature type="binding site" evidence="1">
    <location>
        <begin position="136"/>
        <end position="141"/>
    </location>
    <ligand>
        <name>S-adenosyl-L-methionine</name>
        <dbReference type="ChEBI" id="CHEBI:59789"/>
    </ligand>
</feature>